<reference key="1">
    <citation type="journal article" date="2002" name="Genome Res.">
        <title>A complete sequence of the T. tengcongensis genome.</title>
        <authorList>
            <person name="Bao Q."/>
            <person name="Tian Y."/>
            <person name="Li W."/>
            <person name="Xu Z."/>
            <person name="Xuan Z."/>
            <person name="Hu S."/>
            <person name="Dong W."/>
            <person name="Yang J."/>
            <person name="Chen Y."/>
            <person name="Xue Y."/>
            <person name="Xu Y."/>
            <person name="Lai X."/>
            <person name="Huang L."/>
            <person name="Dong X."/>
            <person name="Ma Y."/>
            <person name="Ling L."/>
            <person name="Tan H."/>
            <person name="Chen R."/>
            <person name="Wang J."/>
            <person name="Yu J."/>
            <person name="Yang H."/>
        </authorList>
    </citation>
    <scope>NUCLEOTIDE SEQUENCE [LARGE SCALE GENOMIC DNA]</scope>
    <source>
        <strain>DSM 15242 / JCM 11007 / NBRC 100824 / MB4</strain>
    </source>
</reference>
<proteinExistence type="inferred from homology"/>
<organism>
    <name type="scientific">Caldanaerobacter subterraneus subsp. tengcongensis (strain DSM 15242 / JCM 11007 / NBRC 100824 / MB4)</name>
    <name type="common">Thermoanaerobacter tengcongensis</name>
    <dbReference type="NCBI Taxonomy" id="273068"/>
    <lineage>
        <taxon>Bacteria</taxon>
        <taxon>Bacillati</taxon>
        <taxon>Bacillota</taxon>
        <taxon>Clostridia</taxon>
        <taxon>Thermoanaerobacterales</taxon>
        <taxon>Thermoanaerobacteraceae</taxon>
        <taxon>Caldanaerobacter</taxon>
    </lineage>
</organism>
<gene>
    <name evidence="1" type="primary">tdk</name>
    <name type="ordered locus">TTE0140</name>
</gene>
<name>KITH_CALS4</name>
<accession>Q8RDA1</accession>
<dbReference type="EC" id="2.7.1.21" evidence="1"/>
<dbReference type="EMBL" id="AE008691">
    <property type="protein sequence ID" value="AAM23444.1"/>
    <property type="molecule type" value="Genomic_DNA"/>
</dbReference>
<dbReference type="SMR" id="Q8RDA1"/>
<dbReference type="STRING" id="273068.TTE0140"/>
<dbReference type="KEGG" id="tte:TTE0140"/>
<dbReference type="eggNOG" id="COG1435">
    <property type="taxonomic scope" value="Bacteria"/>
</dbReference>
<dbReference type="HOGENOM" id="CLU_064400_3_0_9"/>
<dbReference type="OrthoDB" id="9781579at2"/>
<dbReference type="Proteomes" id="UP000000555">
    <property type="component" value="Chromosome"/>
</dbReference>
<dbReference type="GO" id="GO:0005829">
    <property type="term" value="C:cytosol"/>
    <property type="evidence" value="ECO:0007669"/>
    <property type="project" value="TreeGrafter"/>
</dbReference>
<dbReference type="GO" id="GO:0005524">
    <property type="term" value="F:ATP binding"/>
    <property type="evidence" value="ECO:0007669"/>
    <property type="project" value="UniProtKB-UniRule"/>
</dbReference>
<dbReference type="GO" id="GO:0004797">
    <property type="term" value="F:thymidine kinase activity"/>
    <property type="evidence" value="ECO:0007669"/>
    <property type="project" value="UniProtKB-UniRule"/>
</dbReference>
<dbReference type="GO" id="GO:0008270">
    <property type="term" value="F:zinc ion binding"/>
    <property type="evidence" value="ECO:0007669"/>
    <property type="project" value="UniProtKB-UniRule"/>
</dbReference>
<dbReference type="GO" id="GO:0071897">
    <property type="term" value="P:DNA biosynthetic process"/>
    <property type="evidence" value="ECO:0007669"/>
    <property type="project" value="UniProtKB-KW"/>
</dbReference>
<dbReference type="GO" id="GO:0046104">
    <property type="term" value="P:thymidine metabolic process"/>
    <property type="evidence" value="ECO:0007669"/>
    <property type="project" value="TreeGrafter"/>
</dbReference>
<dbReference type="FunFam" id="3.30.60.20:FF:000026">
    <property type="entry name" value="Thymidine kinase"/>
    <property type="match status" value="1"/>
</dbReference>
<dbReference type="FunFam" id="3.40.50.300:FF:000384">
    <property type="entry name" value="Thymidine kinase"/>
    <property type="match status" value="1"/>
</dbReference>
<dbReference type="Gene3D" id="3.30.60.20">
    <property type="match status" value="1"/>
</dbReference>
<dbReference type="Gene3D" id="3.40.50.300">
    <property type="entry name" value="P-loop containing nucleotide triphosphate hydrolases"/>
    <property type="match status" value="1"/>
</dbReference>
<dbReference type="HAMAP" id="MF_00124">
    <property type="entry name" value="Thymidine_kinase"/>
    <property type="match status" value="1"/>
</dbReference>
<dbReference type="InterPro" id="IPR027417">
    <property type="entry name" value="P-loop_NTPase"/>
</dbReference>
<dbReference type="InterPro" id="IPR001267">
    <property type="entry name" value="Thymidine_kinase"/>
</dbReference>
<dbReference type="InterPro" id="IPR020633">
    <property type="entry name" value="Thymidine_kinase_CS"/>
</dbReference>
<dbReference type="NCBIfam" id="NF003296">
    <property type="entry name" value="PRK04296.1-1"/>
    <property type="match status" value="1"/>
</dbReference>
<dbReference type="PANTHER" id="PTHR11441">
    <property type="entry name" value="THYMIDINE KINASE"/>
    <property type="match status" value="1"/>
</dbReference>
<dbReference type="PANTHER" id="PTHR11441:SF0">
    <property type="entry name" value="THYMIDINE KINASE, CYTOSOLIC"/>
    <property type="match status" value="1"/>
</dbReference>
<dbReference type="Pfam" id="PF00265">
    <property type="entry name" value="TK"/>
    <property type="match status" value="1"/>
</dbReference>
<dbReference type="PIRSF" id="PIRSF035805">
    <property type="entry name" value="TK_cell"/>
    <property type="match status" value="1"/>
</dbReference>
<dbReference type="SUPFAM" id="SSF57716">
    <property type="entry name" value="Glucocorticoid receptor-like (DNA-binding domain)"/>
    <property type="match status" value="1"/>
</dbReference>
<dbReference type="SUPFAM" id="SSF52540">
    <property type="entry name" value="P-loop containing nucleoside triphosphate hydrolases"/>
    <property type="match status" value="1"/>
</dbReference>
<dbReference type="PROSITE" id="PS00603">
    <property type="entry name" value="TK_CELLULAR_TYPE"/>
    <property type="match status" value="1"/>
</dbReference>
<keyword id="KW-0067">ATP-binding</keyword>
<keyword id="KW-0963">Cytoplasm</keyword>
<keyword id="KW-0237">DNA synthesis</keyword>
<keyword id="KW-0418">Kinase</keyword>
<keyword id="KW-0479">Metal-binding</keyword>
<keyword id="KW-0547">Nucleotide-binding</keyword>
<keyword id="KW-1185">Reference proteome</keyword>
<keyword id="KW-0808">Transferase</keyword>
<keyword id="KW-0862">Zinc</keyword>
<sequence length="193" mass="21459">MIYGSLDHGFIEVIVGPMFSGKSEELIRRIRRAQIAKQKVQVFKPAIDDRYSIDKVVSHNGSSINAISVTKASEILDLLEEDTQVVAIDEIQFFDHSLVDVVREIADMGKRVICAGLDMDFRGEPFGVTPDIMAIAESVDKLTAICVKCGNPATRTQRLINGKPAKYDDPIILVGAHETYEARCRKCHEVPRT</sequence>
<evidence type="ECO:0000255" key="1">
    <source>
        <dbReference type="HAMAP-Rule" id="MF_00124"/>
    </source>
</evidence>
<comment type="catalytic activity">
    <reaction evidence="1">
        <text>thymidine + ATP = dTMP + ADP + H(+)</text>
        <dbReference type="Rhea" id="RHEA:19129"/>
        <dbReference type="ChEBI" id="CHEBI:15378"/>
        <dbReference type="ChEBI" id="CHEBI:17748"/>
        <dbReference type="ChEBI" id="CHEBI:30616"/>
        <dbReference type="ChEBI" id="CHEBI:63528"/>
        <dbReference type="ChEBI" id="CHEBI:456216"/>
        <dbReference type="EC" id="2.7.1.21"/>
    </reaction>
</comment>
<comment type="subunit">
    <text evidence="1">Homotetramer.</text>
</comment>
<comment type="subcellular location">
    <subcellularLocation>
        <location evidence="1">Cytoplasm</location>
    </subcellularLocation>
</comment>
<comment type="similarity">
    <text evidence="1">Belongs to the thymidine kinase family.</text>
</comment>
<feature type="chain" id="PRO_0000175041" description="Thymidine kinase">
    <location>
        <begin position="1"/>
        <end position="193"/>
    </location>
</feature>
<feature type="active site" description="Proton acceptor" evidence="1">
    <location>
        <position position="90"/>
    </location>
</feature>
<feature type="binding site" evidence="1">
    <location>
        <begin position="16"/>
        <end position="23"/>
    </location>
    <ligand>
        <name>ATP</name>
        <dbReference type="ChEBI" id="CHEBI:30616"/>
    </ligand>
</feature>
<feature type="binding site" evidence="1">
    <location>
        <begin position="89"/>
        <end position="92"/>
    </location>
    <ligand>
        <name>ATP</name>
        <dbReference type="ChEBI" id="CHEBI:30616"/>
    </ligand>
</feature>
<feature type="binding site" evidence="1">
    <location>
        <position position="146"/>
    </location>
    <ligand>
        <name>Zn(2+)</name>
        <dbReference type="ChEBI" id="CHEBI:29105"/>
    </ligand>
</feature>
<feature type="binding site" evidence="1">
    <location>
        <position position="149"/>
    </location>
    <ligand>
        <name>Zn(2+)</name>
        <dbReference type="ChEBI" id="CHEBI:29105"/>
    </ligand>
</feature>
<feature type="binding site" evidence="1">
    <location>
        <position position="184"/>
    </location>
    <ligand>
        <name>Zn(2+)</name>
        <dbReference type="ChEBI" id="CHEBI:29105"/>
    </ligand>
</feature>
<feature type="binding site" evidence="1">
    <location>
        <position position="187"/>
    </location>
    <ligand>
        <name>Zn(2+)</name>
        <dbReference type="ChEBI" id="CHEBI:29105"/>
    </ligand>
</feature>
<protein>
    <recommendedName>
        <fullName evidence="1">Thymidine kinase</fullName>
        <ecNumber evidence="1">2.7.1.21</ecNumber>
    </recommendedName>
</protein>